<accession>A9N5J6</accession>
<gene>
    <name evidence="1" type="primary">nagZ</name>
    <name type="ordered locus">SPAB_02313</name>
</gene>
<comment type="function">
    <text evidence="1">Plays a role in peptidoglycan recycling by cleaving the terminal beta-1,4-linked N-acetylglucosamine (GlcNAc) from peptide-linked peptidoglycan fragments, giving rise to free GlcNAc, anhydro-N-acetylmuramic acid and anhydro-N-acetylmuramic acid-linked peptides.</text>
</comment>
<comment type="catalytic activity">
    <reaction evidence="1">
        <text>Hydrolysis of terminal non-reducing N-acetyl-D-hexosamine residues in N-acetyl-beta-D-hexosaminides.</text>
        <dbReference type="EC" id="3.2.1.52"/>
    </reaction>
</comment>
<comment type="pathway">
    <text evidence="1">Cell wall biogenesis; peptidoglycan recycling.</text>
</comment>
<comment type="subcellular location">
    <subcellularLocation>
        <location evidence="1">Cytoplasm</location>
    </subcellularLocation>
</comment>
<comment type="similarity">
    <text evidence="1">Belongs to the glycosyl hydrolase 3 family. NagZ subfamily.</text>
</comment>
<keyword id="KW-0131">Cell cycle</keyword>
<keyword id="KW-0132">Cell division</keyword>
<keyword id="KW-0133">Cell shape</keyword>
<keyword id="KW-0961">Cell wall biogenesis/degradation</keyword>
<keyword id="KW-0963">Cytoplasm</keyword>
<keyword id="KW-0326">Glycosidase</keyword>
<keyword id="KW-0378">Hydrolase</keyword>
<keyword id="KW-0573">Peptidoglycan synthesis</keyword>
<dbReference type="EC" id="3.2.1.52" evidence="1"/>
<dbReference type="EMBL" id="CP000886">
    <property type="protein sequence ID" value="ABX67696.1"/>
    <property type="molecule type" value="Genomic_DNA"/>
</dbReference>
<dbReference type="RefSeq" id="WP_000529340.1">
    <property type="nucleotide sequence ID" value="NC_010102.1"/>
</dbReference>
<dbReference type="SMR" id="A9N5J6"/>
<dbReference type="CAZy" id="GH3">
    <property type="family name" value="Glycoside Hydrolase Family 3"/>
</dbReference>
<dbReference type="KEGG" id="spq:SPAB_02313"/>
<dbReference type="PATRIC" id="fig|1016998.12.peg.2188"/>
<dbReference type="HOGENOM" id="CLU_008392_0_0_6"/>
<dbReference type="BioCyc" id="SENT1016998:SPAB_RS09405-MONOMER"/>
<dbReference type="UniPathway" id="UPA00544"/>
<dbReference type="Proteomes" id="UP000008556">
    <property type="component" value="Chromosome"/>
</dbReference>
<dbReference type="GO" id="GO:0005737">
    <property type="term" value="C:cytoplasm"/>
    <property type="evidence" value="ECO:0007669"/>
    <property type="project" value="UniProtKB-SubCell"/>
</dbReference>
<dbReference type="GO" id="GO:0004563">
    <property type="term" value="F:beta-N-acetylhexosaminidase activity"/>
    <property type="evidence" value="ECO:0007669"/>
    <property type="project" value="UniProtKB-UniRule"/>
</dbReference>
<dbReference type="GO" id="GO:0005975">
    <property type="term" value="P:carbohydrate metabolic process"/>
    <property type="evidence" value="ECO:0007669"/>
    <property type="project" value="InterPro"/>
</dbReference>
<dbReference type="GO" id="GO:0051301">
    <property type="term" value="P:cell division"/>
    <property type="evidence" value="ECO:0007669"/>
    <property type="project" value="UniProtKB-KW"/>
</dbReference>
<dbReference type="GO" id="GO:0071555">
    <property type="term" value="P:cell wall organization"/>
    <property type="evidence" value="ECO:0007669"/>
    <property type="project" value="UniProtKB-KW"/>
</dbReference>
<dbReference type="GO" id="GO:0009252">
    <property type="term" value="P:peptidoglycan biosynthetic process"/>
    <property type="evidence" value="ECO:0007669"/>
    <property type="project" value="UniProtKB-KW"/>
</dbReference>
<dbReference type="GO" id="GO:0009254">
    <property type="term" value="P:peptidoglycan turnover"/>
    <property type="evidence" value="ECO:0007669"/>
    <property type="project" value="UniProtKB-UniRule"/>
</dbReference>
<dbReference type="GO" id="GO:0008360">
    <property type="term" value="P:regulation of cell shape"/>
    <property type="evidence" value="ECO:0007669"/>
    <property type="project" value="UniProtKB-KW"/>
</dbReference>
<dbReference type="FunFam" id="3.20.20.300:FF:000001">
    <property type="entry name" value="Beta-hexosaminidase"/>
    <property type="match status" value="1"/>
</dbReference>
<dbReference type="Gene3D" id="3.20.20.300">
    <property type="entry name" value="Glycoside hydrolase, family 3, N-terminal domain"/>
    <property type="match status" value="1"/>
</dbReference>
<dbReference type="HAMAP" id="MF_00364">
    <property type="entry name" value="NagZ"/>
    <property type="match status" value="1"/>
</dbReference>
<dbReference type="InterPro" id="IPR022956">
    <property type="entry name" value="Beta_hexosaminidase_bac"/>
</dbReference>
<dbReference type="InterPro" id="IPR019800">
    <property type="entry name" value="Glyco_hydro_3_AS"/>
</dbReference>
<dbReference type="InterPro" id="IPR001764">
    <property type="entry name" value="Glyco_hydro_3_N"/>
</dbReference>
<dbReference type="InterPro" id="IPR036962">
    <property type="entry name" value="Glyco_hydro_3_N_sf"/>
</dbReference>
<dbReference type="InterPro" id="IPR017853">
    <property type="entry name" value="Glycoside_hydrolase_SF"/>
</dbReference>
<dbReference type="InterPro" id="IPR050226">
    <property type="entry name" value="NagZ_Beta-hexosaminidase"/>
</dbReference>
<dbReference type="NCBIfam" id="NF003740">
    <property type="entry name" value="PRK05337.1"/>
    <property type="match status" value="1"/>
</dbReference>
<dbReference type="PANTHER" id="PTHR30480:SF13">
    <property type="entry name" value="BETA-HEXOSAMINIDASE"/>
    <property type="match status" value="1"/>
</dbReference>
<dbReference type="PANTHER" id="PTHR30480">
    <property type="entry name" value="BETA-HEXOSAMINIDASE-RELATED"/>
    <property type="match status" value="1"/>
</dbReference>
<dbReference type="Pfam" id="PF00933">
    <property type="entry name" value="Glyco_hydro_3"/>
    <property type="match status" value="1"/>
</dbReference>
<dbReference type="SUPFAM" id="SSF51445">
    <property type="entry name" value="(Trans)glycosidases"/>
    <property type="match status" value="1"/>
</dbReference>
<dbReference type="PROSITE" id="PS00775">
    <property type="entry name" value="GLYCOSYL_HYDROL_F3"/>
    <property type="match status" value="1"/>
</dbReference>
<evidence type="ECO:0000255" key="1">
    <source>
        <dbReference type="HAMAP-Rule" id="MF_00364"/>
    </source>
</evidence>
<evidence type="ECO:0000256" key="2">
    <source>
        <dbReference type="SAM" id="MobiDB-lite"/>
    </source>
</evidence>
<proteinExistence type="inferred from homology"/>
<name>NAGZ_SALPB</name>
<feature type="chain" id="PRO_1000079577" description="Beta-hexosaminidase">
    <location>
        <begin position="1"/>
        <end position="341"/>
    </location>
</feature>
<feature type="region of interest" description="Disordered" evidence="2">
    <location>
        <begin position="170"/>
        <end position="189"/>
    </location>
</feature>
<feature type="compositionally biased region" description="Basic and acidic residues" evidence="2">
    <location>
        <begin position="174"/>
        <end position="189"/>
    </location>
</feature>
<feature type="active site" description="Proton donor/acceptor" evidence="1">
    <location>
        <position position="176"/>
    </location>
</feature>
<feature type="active site" description="Nucleophile" evidence="1">
    <location>
        <position position="248"/>
    </location>
</feature>
<feature type="binding site" evidence="1">
    <location>
        <position position="62"/>
    </location>
    <ligand>
        <name>substrate</name>
    </ligand>
</feature>
<feature type="binding site" evidence="1">
    <location>
        <position position="70"/>
    </location>
    <ligand>
        <name>substrate</name>
    </ligand>
</feature>
<feature type="binding site" evidence="1">
    <location>
        <position position="133"/>
    </location>
    <ligand>
        <name>substrate</name>
    </ligand>
</feature>
<feature type="binding site" evidence="1">
    <location>
        <begin position="163"/>
        <end position="164"/>
    </location>
    <ligand>
        <name>substrate</name>
    </ligand>
</feature>
<feature type="site" description="Important for catalytic activity" evidence="1">
    <location>
        <position position="174"/>
    </location>
</feature>
<protein>
    <recommendedName>
        <fullName evidence="1">Beta-hexosaminidase</fullName>
        <ecNumber evidence="1">3.2.1.52</ecNumber>
    </recommendedName>
    <alternativeName>
        <fullName evidence="1">Beta-N-acetylhexosaminidase</fullName>
    </alternativeName>
    <alternativeName>
        <fullName evidence="1">N-acetyl-beta-glucosaminidase</fullName>
    </alternativeName>
</protein>
<organism>
    <name type="scientific">Salmonella paratyphi B (strain ATCC BAA-1250 / SPB7)</name>
    <dbReference type="NCBI Taxonomy" id="1016998"/>
    <lineage>
        <taxon>Bacteria</taxon>
        <taxon>Pseudomonadati</taxon>
        <taxon>Pseudomonadota</taxon>
        <taxon>Gammaproteobacteria</taxon>
        <taxon>Enterobacterales</taxon>
        <taxon>Enterobacteriaceae</taxon>
        <taxon>Salmonella</taxon>
    </lineage>
</organism>
<sequence length="341" mass="37698">MGPVMLNVEGCELDAEEREILAHPLVGGLILFTRNYHDPEQLRELVRQIRAASRNHLVVAVDQEGGRVQRFREGFTRLPAAQSFFALHGLEEGGRLAQEAGWLMASEMIAMDIDISFAPVLDVGHISAAIGERSYHADPAKALAMATRFIDGMHDAGMKTTGKHFPGHGAVTADSHKETPCDPRPETDIRGKDMSVFRTLISENKLDAIMPAHVIYRAIDPRPASGSPYWLKTVLRQELGFDGVIFSDDLSMEGAAIMGSYAERAQASLDAGCDMILVCNNRKGAVSVLDNLSPIKAERVTRLYHKGSFSRRELMDSARWKTASAQLNQLHERWQEEKAGH</sequence>
<reference key="1">
    <citation type="submission" date="2007-11" db="EMBL/GenBank/DDBJ databases">
        <authorList>
            <consortium name="The Salmonella enterica serovar Paratyphi B Genome Sequencing Project"/>
            <person name="McClelland M."/>
            <person name="Sanderson E.K."/>
            <person name="Porwollik S."/>
            <person name="Spieth J."/>
            <person name="Clifton W.S."/>
            <person name="Fulton R."/>
            <person name="Cordes M."/>
            <person name="Wollam A."/>
            <person name="Shah N."/>
            <person name="Pepin K."/>
            <person name="Bhonagiri V."/>
            <person name="Nash W."/>
            <person name="Johnson M."/>
            <person name="Thiruvilangam P."/>
            <person name="Wilson R."/>
        </authorList>
    </citation>
    <scope>NUCLEOTIDE SEQUENCE [LARGE SCALE GENOMIC DNA]</scope>
    <source>
        <strain>ATCC BAA-1250 / SPB7</strain>
    </source>
</reference>